<comment type="function">
    <text evidence="1">With CysN forms the ATP sulfurylase (ATPS) that catalyzes the adenylation of sulfate producing adenosine 5'-phosphosulfate (APS) and diphosphate, the first enzymatic step in sulfur assimilation pathway. APS synthesis involves the formation of a high-energy phosphoric-sulfuric acid anhydride bond driven by GTP hydrolysis by CysN coupled to ATP hydrolysis by CysD.</text>
</comment>
<comment type="catalytic activity">
    <reaction evidence="1">
        <text>sulfate + ATP + H(+) = adenosine 5'-phosphosulfate + diphosphate</text>
        <dbReference type="Rhea" id="RHEA:18133"/>
        <dbReference type="ChEBI" id="CHEBI:15378"/>
        <dbReference type="ChEBI" id="CHEBI:16189"/>
        <dbReference type="ChEBI" id="CHEBI:30616"/>
        <dbReference type="ChEBI" id="CHEBI:33019"/>
        <dbReference type="ChEBI" id="CHEBI:58243"/>
        <dbReference type="EC" id="2.7.7.4"/>
    </reaction>
</comment>
<comment type="pathway">
    <text evidence="1">Sulfur metabolism; hydrogen sulfide biosynthesis; sulfite from sulfate: step 1/3.</text>
</comment>
<comment type="subunit">
    <text evidence="1">Heterodimer composed of CysD, the smaller subunit, and CysN.</text>
</comment>
<comment type="similarity">
    <text evidence="1">Belongs to the PAPS reductase family. CysD subfamily.</text>
</comment>
<keyword id="KW-0067">ATP-binding</keyword>
<keyword id="KW-0547">Nucleotide-binding</keyword>
<keyword id="KW-0548">Nucleotidyltransferase</keyword>
<keyword id="KW-0808">Transferase</keyword>
<gene>
    <name evidence="1" type="primary">cysD</name>
    <name type="ordered locus">PFLU_0760</name>
</gene>
<reference key="1">
    <citation type="journal article" date="2009" name="Genome Biol.">
        <title>Genomic and genetic analyses of diversity and plant interactions of Pseudomonas fluorescens.</title>
        <authorList>
            <person name="Silby M.W."/>
            <person name="Cerdeno-Tarraga A.M."/>
            <person name="Vernikos G.S."/>
            <person name="Giddens S.R."/>
            <person name="Jackson R.W."/>
            <person name="Preston G.M."/>
            <person name="Zhang X.-X."/>
            <person name="Moon C.D."/>
            <person name="Gehrig S.M."/>
            <person name="Godfrey S.A.C."/>
            <person name="Knight C.G."/>
            <person name="Malone J.G."/>
            <person name="Robinson Z."/>
            <person name="Spiers A.J."/>
            <person name="Harris S."/>
            <person name="Challis G.L."/>
            <person name="Yaxley A.M."/>
            <person name="Harris D."/>
            <person name="Seeger K."/>
            <person name="Murphy L."/>
            <person name="Rutter S."/>
            <person name="Squares R."/>
            <person name="Quail M.A."/>
            <person name="Saunders E."/>
            <person name="Mavromatis K."/>
            <person name="Brettin T.S."/>
            <person name="Bentley S.D."/>
            <person name="Hothersall J."/>
            <person name="Stephens E."/>
            <person name="Thomas C.M."/>
            <person name="Parkhill J."/>
            <person name="Levy S.B."/>
            <person name="Rainey P.B."/>
            <person name="Thomson N.R."/>
        </authorList>
    </citation>
    <scope>NUCLEOTIDE SEQUENCE [LARGE SCALE GENOMIC DNA]</scope>
    <source>
        <strain>SBW25</strain>
    </source>
</reference>
<proteinExistence type="inferred from homology"/>
<protein>
    <recommendedName>
        <fullName evidence="1">Sulfate adenylyltransferase subunit 2</fullName>
        <ecNumber evidence="1">2.7.7.4</ecNumber>
    </recommendedName>
    <alternativeName>
        <fullName evidence="1">ATP-sulfurylase small subunit</fullName>
    </alternativeName>
    <alternativeName>
        <fullName evidence="1">Sulfate adenylate transferase</fullName>
        <shortName evidence="1">SAT</shortName>
    </alternativeName>
</protein>
<sequence>MVDKLTHLKQLEAESIHIIREVAAEFDNPVMLYSIGKDSAVMLHLARKAFFPGKLPFPVMHVDTRWKFQEMYTFRDKMVEELGLDLITHVNPDGVAQGINPFTHGSAKHTDIMKTEGLKQALDKHGFDAAFGGARRDEEKSRAKERVYSFRDSKHRWDPKNQRPELWNVYNGNVNKGESIRVFPLSNWTELDIWQYIYLEGIPIVPLYFAAERDVIEKNGTLIMIDDDRILEHLSDEDKARIVKKKVRFRTLGCYPLTGAVESEAETLTDIIQEMLLTRTSERQGRVIDHDGAGSMEDKKRQGYF</sequence>
<feature type="chain" id="PRO_1000202403" description="Sulfate adenylyltransferase subunit 2">
    <location>
        <begin position="1"/>
        <end position="305"/>
    </location>
</feature>
<dbReference type="EC" id="2.7.7.4" evidence="1"/>
<dbReference type="EMBL" id="AM181176">
    <property type="protein sequence ID" value="CAY47028.1"/>
    <property type="molecule type" value="Genomic_DNA"/>
</dbReference>
<dbReference type="RefSeq" id="WP_012722132.1">
    <property type="nucleotide sequence ID" value="NC_012660.1"/>
</dbReference>
<dbReference type="SMR" id="C3KDP1"/>
<dbReference type="STRING" id="294.SRM1_00924"/>
<dbReference type="GeneID" id="93462376"/>
<dbReference type="eggNOG" id="COG0175">
    <property type="taxonomic scope" value="Bacteria"/>
</dbReference>
<dbReference type="HOGENOM" id="CLU_043026_0_0_6"/>
<dbReference type="OrthoDB" id="9772604at2"/>
<dbReference type="UniPathway" id="UPA00140">
    <property type="reaction ID" value="UER00204"/>
</dbReference>
<dbReference type="GO" id="GO:0005524">
    <property type="term" value="F:ATP binding"/>
    <property type="evidence" value="ECO:0007669"/>
    <property type="project" value="UniProtKB-KW"/>
</dbReference>
<dbReference type="GO" id="GO:0004781">
    <property type="term" value="F:sulfate adenylyltransferase (ATP) activity"/>
    <property type="evidence" value="ECO:0007669"/>
    <property type="project" value="UniProtKB-UniRule"/>
</dbReference>
<dbReference type="GO" id="GO:0070814">
    <property type="term" value="P:hydrogen sulfide biosynthetic process"/>
    <property type="evidence" value="ECO:0007669"/>
    <property type="project" value="UniProtKB-UniRule"/>
</dbReference>
<dbReference type="GO" id="GO:0000103">
    <property type="term" value="P:sulfate assimilation"/>
    <property type="evidence" value="ECO:0007669"/>
    <property type="project" value="UniProtKB-UniRule"/>
</dbReference>
<dbReference type="CDD" id="cd23946">
    <property type="entry name" value="Sulfate_adenylyltransferase_2"/>
    <property type="match status" value="1"/>
</dbReference>
<dbReference type="FunFam" id="3.40.50.620:FF:000002">
    <property type="entry name" value="Sulfate adenylyltransferase subunit 2"/>
    <property type="match status" value="1"/>
</dbReference>
<dbReference type="Gene3D" id="3.40.50.620">
    <property type="entry name" value="HUPs"/>
    <property type="match status" value="1"/>
</dbReference>
<dbReference type="HAMAP" id="MF_00064">
    <property type="entry name" value="Sulf_adenylyltr_sub2"/>
    <property type="match status" value="1"/>
</dbReference>
<dbReference type="InterPro" id="IPR002500">
    <property type="entry name" value="PAPS_reduct_dom"/>
</dbReference>
<dbReference type="InterPro" id="IPR014729">
    <property type="entry name" value="Rossmann-like_a/b/a_fold"/>
</dbReference>
<dbReference type="InterPro" id="IPR011784">
    <property type="entry name" value="SO4_adenylTrfase_ssu"/>
</dbReference>
<dbReference type="InterPro" id="IPR050128">
    <property type="entry name" value="Sulfate_adenylyltrnsfr_sub2"/>
</dbReference>
<dbReference type="NCBIfam" id="TIGR02039">
    <property type="entry name" value="CysD"/>
    <property type="match status" value="1"/>
</dbReference>
<dbReference type="NCBIfam" id="NF003587">
    <property type="entry name" value="PRK05253.1"/>
    <property type="match status" value="1"/>
</dbReference>
<dbReference type="NCBIfam" id="NF009214">
    <property type="entry name" value="PRK12563.1"/>
    <property type="match status" value="1"/>
</dbReference>
<dbReference type="PANTHER" id="PTHR43196">
    <property type="entry name" value="SULFATE ADENYLYLTRANSFERASE SUBUNIT 2"/>
    <property type="match status" value="1"/>
</dbReference>
<dbReference type="PANTHER" id="PTHR43196:SF1">
    <property type="entry name" value="SULFATE ADENYLYLTRANSFERASE SUBUNIT 2"/>
    <property type="match status" value="1"/>
</dbReference>
<dbReference type="Pfam" id="PF01507">
    <property type="entry name" value="PAPS_reduct"/>
    <property type="match status" value="1"/>
</dbReference>
<dbReference type="PIRSF" id="PIRSF002936">
    <property type="entry name" value="CysDAde_trans"/>
    <property type="match status" value="1"/>
</dbReference>
<dbReference type="SUPFAM" id="SSF52402">
    <property type="entry name" value="Adenine nucleotide alpha hydrolases-like"/>
    <property type="match status" value="1"/>
</dbReference>
<accession>C3KDP1</accession>
<name>CYSD_PSEFS</name>
<organism>
    <name type="scientific">Pseudomonas fluorescens (strain SBW25)</name>
    <dbReference type="NCBI Taxonomy" id="216595"/>
    <lineage>
        <taxon>Bacteria</taxon>
        <taxon>Pseudomonadati</taxon>
        <taxon>Pseudomonadota</taxon>
        <taxon>Gammaproteobacteria</taxon>
        <taxon>Pseudomonadales</taxon>
        <taxon>Pseudomonadaceae</taxon>
        <taxon>Pseudomonas</taxon>
    </lineage>
</organism>
<evidence type="ECO:0000255" key="1">
    <source>
        <dbReference type="HAMAP-Rule" id="MF_00064"/>
    </source>
</evidence>